<evidence type="ECO:0000250" key="1">
    <source>
        <dbReference type="UniProtKB" id="P32131"/>
    </source>
</evidence>
<evidence type="ECO:0000255" key="2">
    <source>
        <dbReference type="PROSITE-ProRule" id="PRU01266"/>
    </source>
</evidence>
<evidence type="ECO:0000305" key="3"/>
<dbReference type="EC" id="1.3.98.3" evidence="1"/>
<dbReference type="EMBL" id="AE001439">
    <property type="protein sequence ID" value="AAD06178.1"/>
    <property type="molecule type" value="Genomic_DNA"/>
</dbReference>
<dbReference type="PIR" id="H71911">
    <property type="entry name" value="H71911"/>
</dbReference>
<dbReference type="RefSeq" id="WP_001193185.1">
    <property type="nucleotide sequence ID" value="NC_000921.1"/>
</dbReference>
<dbReference type="SMR" id="Q9ZLH0"/>
<dbReference type="KEGG" id="hpj:jhp_0610"/>
<dbReference type="PATRIC" id="fig|85963.30.peg.375"/>
<dbReference type="eggNOG" id="COG0635">
    <property type="taxonomic scope" value="Bacteria"/>
</dbReference>
<dbReference type="UniPathway" id="UPA00251">
    <property type="reaction ID" value="UER00323"/>
</dbReference>
<dbReference type="Proteomes" id="UP000000804">
    <property type="component" value="Chromosome"/>
</dbReference>
<dbReference type="GO" id="GO:0005737">
    <property type="term" value="C:cytoplasm"/>
    <property type="evidence" value="ECO:0000250"/>
    <property type="project" value="UniProtKB"/>
</dbReference>
<dbReference type="GO" id="GO:0051539">
    <property type="term" value="F:4 iron, 4 sulfur cluster binding"/>
    <property type="evidence" value="ECO:0000250"/>
    <property type="project" value="UniProtKB"/>
</dbReference>
<dbReference type="GO" id="GO:0051989">
    <property type="term" value="F:coproporphyrinogen dehydrogenase activity"/>
    <property type="evidence" value="ECO:0000250"/>
    <property type="project" value="UniProtKB"/>
</dbReference>
<dbReference type="GO" id="GO:0004109">
    <property type="term" value="F:coproporphyrinogen oxidase activity"/>
    <property type="evidence" value="ECO:0007669"/>
    <property type="project" value="InterPro"/>
</dbReference>
<dbReference type="GO" id="GO:0046872">
    <property type="term" value="F:metal ion binding"/>
    <property type="evidence" value="ECO:0007669"/>
    <property type="project" value="UniProtKB-KW"/>
</dbReference>
<dbReference type="GO" id="GO:0006779">
    <property type="term" value="P:porphyrin-containing compound biosynthetic process"/>
    <property type="evidence" value="ECO:0000250"/>
    <property type="project" value="UniProtKB"/>
</dbReference>
<dbReference type="GO" id="GO:0006782">
    <property type="term" value="P:protoporphyrinogen IX biosynthetic process"/>
    <property type="evidence" value="ECO:0000250"/>
    <property type="project" value="UniProtKB"/>
</dbReference>
<dbReference type="CDD" id="cd01335">
    <property type="entry name" value="Radical_SAM"/>
    <property type="match status" value="1"/>
</dbReference>
<dbReference type="FunFam" id="1.10.10.920:FF:000001">
    <property type="entry name" value="Coproporphyrinogen-III oxidase"/>
    <property type="match status" value="1"/>
</dbReference>
<dbReference type="FunFam" id="3.80.30.20:FF:000012">
    <property type="entry name" value="Coproporphyrinogen-III oxidase"/>
    <property type="match status" value="1"/>
</dbReference>
<dbReference type="Gene3D" id="1.10.10.920">
    <property type="match status" value="1"/>
</dbReference>
<dbReference type="Gene3D" id="3.80.30.20">
    <property type="entry name" value="tm_1862 like domain"/>
    <property type="match status" value="1"/>
</dbReference>
<dbReference type="InterPro" id="IPR004558">
    <property type="entry name" value="Coprogen_oxidase_HemN"/>
</dbReference>
<dbReference type="InterPro" id="IPR034505">
    <property type="entry name" value="Coproporphyrinogen-III_oxidase"/>
</dbReference>
<dbReference type="InterPro" id="IPR006638">
    <property type="entry name" value="Elp3/MiaA/NifB-like_rSAM"/>
</dbReference>
<dbReference type="InterPro" id="IPR010723">
    <property type="entry name" value="HemN_C"/>
</dbReference>
<dbReference type="InterPro" id="IPR007197">
    <property type="entry name" value="rSAM"/>
</dbReference>
<dbReference type="InterPro" id="IPR023404">
    <property type="entry name" value="rSAM_horseshoe"/>
</dbReference>
<dbReference type="NCBIfam" id="TIGR00538">
    <property type="entry name" value="hemN"/>
    <property type="match status" value="1"/>
</dbReference>
<dbReference type="PANTHER" id="PTHR13932">
    <property type="entry name" value="COPROPORPHYRINIGEN III OXIDASE"/>
    <property type="match status" value="1"/>
</dbReference>
<dbReference type="PANTHER" id="PTHR13932:SF6">
    <property type="entry name" value="OXYGEN-INDEPENDENT COPROPORPHYRINOGEN III OXIDASE"/>
    <property type="match status" value="1"/>
</dbReference>
<dbReference type="Pfam" id="PF06969">
    <property type="entry name" value="HemN_C"/>
    <property type="match status" value="1"/>
</dbReference>
<dbReference type="Pfam" id="PF04055">
    <property type="entry name" value="Radical_SAM"/>
    <property type="match status" value="1"/>
</dbReference>
<dbReference type="PIRSF" id="PIRSF000167">
    <property type="entry name" value="HemN"/>
    <property type="match status" value="1"/>
</dbReference>
<dbReference type="SFLD" id="SFLDG01082">
    <property type="entry name" value="B12-binding_domain_containing"/>
    <property type="match status" value="1"/>
</dbReference>
<dbReference type="SFLD" id="SFLDF00277">
    <property type="entry name" value="oxygen-independent_coproporphy"/>
    <property type="match status" value="1"/>
</dbReference>
<dbReference type="SFLD" id="SFLDS00029">
    <property type="entry name" value="Radical_SAM"/>
    <property type="match status" value="1"/>
</dbReference>
<dbReference type="SMART" id="SM00729">
    <property type="entry name" value="Elp3"/>
    <property type="match status" value="1"/>
</dbReference>
<dbReference type="SUPFAM" id="SSF102114">
    <property type="entry name" value="Radical SAM enzymes"/>
    <property type="match status" value="1"/>
</dbReference>
<dbReference type="PROSITE" id="PS51918">
    <property type="entry name" value="RADICAL_SAM"/>
    <property type="match status" value="1"/>
</dbReference>
<protein>
    <recommendedName>
        <fullName>Oxygen-independent coproporphyrinogen III oxidase</fullName>
        <shortName>CPO</shortName>
        <ecNumber evidence="1">1.3.98.3</ecNumber>
    </recommendedName>
    <alternativeName>
        <fullName>Coproporphyrinogen III dehydrogenase</fullName>
        <shortName>CPDH</shortName>
    </alternativeName>
</protein>
<comment type="function">
    <text evidence="1">Involved in the heme biosynthesis. Catalyzes the anaerobic oxidative decarboxylation of propionate groups of rings A and B of coproporphyrinogen III to yield the vinyl groups in protoporphyrinogen IX.</text>
</comment>
<comment type="catalytic activity">
    <reaction evidence="1">
        <text>coproporphyrinogen III + 2 S-adenosyl-L-methionine = protoporphyrinogen IX + 2 5'-deoxyadenosine + 2 L-methionine + 2 CO2</text>
        <dbReference type="Rhea" id="RHEA:15425"/>
        <dbReference type="ChEBI" id="CHEBI:16526"/>
        <dbReference type="ChEBI" id="CHEBI:17319"/>
        <dbReference type="ChEBI" id="CHEBI:57307"/>
        <dbReference type="ChEBI" id="CHEBI:57309"/>
        <dbReference type="ChEBI" id="CHEBI:57844"/>
        <dbReference type="ChEBI" id="CHEBI:59789"/>
        <dbReference type="EC" id="1.3.98.3"/>
    </reaction>
</comment>
<comment type="cofactor">
    <cofactor evidence="1">
        <name>[4Fe-4S] cluster</name>
        <dbReference type="ChEBI" id="CHEBI:49883"/>
    </cofactor>
    <text evidence="1">Binds 1 [4Fe-4S] cluster. The cluster is coordinated with 3 cysteines and an exchangeable S-adenosyl-L-methionine.</text>
</comment>
<comment type="pathway">
    <text>Porphyrin-containing compound metabolism; protoporphyrin-IX biosynthesis; protoporphyrinogen-IX from coproporphyrinogen-III (AdoMet route): step 1/1.</text>
</comment>
<comment type="subunit">
    <text evidence="1">Monomer.</text>
</comment>
<comment type="subcellular location">
    <subcellularLocation>
        <location evidence="1">Cytoplasm</location>
    </subcellularLocation>
</comment>
<comment type="similarity">
    <text evidence="3">Belongs to the anaerobic coproporphyrinogen-III oxidase family.</text>
</comment>
<organism>
    <name type="scientific">Helicobacter pylori (strain J99 / ATCC 700824)</name>
    <name type="common">Campylobacter pylori J99</name>
    <dbReference type="NCBI Taxonomy" id="85963"/>
    <lineage>
        <taxon>Bacteria</taxon>
        <taxon>Pseudomonadati</taxon>
        <taxon>Campylobacterota</taxon>
        <taxon>Epsilonproteobacteria</taxon>
        <taxon>Campylobacterales</taxon>
        <taxon>Helicobacteraceae</taxon>
        <taxon>Helicobacter</taxon>
    </lineage>
</organism>
<feature type="chain" id="PRO_0000109943" description="Oxygen-independent coproporphyrinogen III oxidase">
    <location>
        <begin position="1"/>
        <end position="457"/>
    </location>
</feature>
<feature type="domain" description="Radical SAM core" evidence="2">
    <location>
        <begin position="47"/>
        <end position="279"/>
    </location>
</feature>
<feature type="binding site" evidence="1">
    <location>
        <position position="56"/>
    </location>
    <ligand>
        <name>S-adenosyl-L-methionine</name>
        <dbReference type="ChEBI" id="CHEBI:59789"/>
        <label>1</label>
    </ligand>
</feature>
<feature type="binding site" evidence="1">
    <location>
        <position position="62"/>
    </location>
    <ligand>
        <name>[4Fe-4S] cluster</name>
        <dbReference type="ChEBI" id="CHEBI:49883"/>
        <note>4Fe-4S-S-AdoMet</note>
    </ligand>
</feature>
<feature type="binding site" evidence="1">
    <location>
        <position position="66"/>
    </location>
    <ligand>
        <name>[4Fe-4S] cluster</name>
        <dbReference type="ChEBI" id="CHEBI:49883"/>
        <note>4Fe-4S-S-AdoMet</note>
    </ligand>
</feature>
<feature type="binding site" evidence="1">
    <location>
        <position position="68"/>
    </location>
    <ligand>
        <name>S-adenosyl-L-methionine</name>
        <dbReference type="ChEBI" id="CHEBI:59789"/>
        <label>2</label>
    </ligand>
</feature>
<feature type="binding site" evidence="1">
    <location>
        <position position="69"/>
    </location>
    <ligand>
        <name>[4Fe-4S] cluster</name>
        <dbReference type="ChEBI" id="CHEBI:49883"/>
        <note>4Fe-4S-S-AdoMet</note>
    </ligand>
</feature>
<feature type="binding site" evidence="1">
    <location>
        <position position="113"/>
    </location>
    <ligand>
        <name>S-adenosyl-L-methionine</name>
        <dbReference type="ChEBI" id="CHEBI:59789"/>
        <label>1</label>
    </ligand>
</feature>
<feature type="binding site" evidence="1">
    <location>
        <begin position="114"/>
        <end position="115"/>
    </location>
    <ligand>
        <name>S-adenosyl-L-methionine</name>
        <dbReference type="ChEBI" id="CHEBI:59789"/>
        <label>2</label>
    </ligand>
</feature>
<feature type="binding site" evidence="1">
    <location>
        <position position="147"/>
    </location>
    <ligand>
        <name>S-adenosyl-L-methionine</name>
        <dbReference type="ChEBI" id="CHEBI:59789"/>
        <label>1</label>
    </ligand>
</feature>
<feature type="binding site" evidence="1">
    <location>
        <position position="174"/>
    </location>
    <ligand>
        <name>S-adenosyl-L-methionine</name>
        <dbReference type="ChEBI" id="CHEBI:59789"/>
        <label>2</label>
    </ligand>
</feature>
<feature type="binding site" evidence="1">
    <location>
        <position position="186"/>
    </location>
    <ligand>
        <name>S-adenosyl-L-methionine</name>
        <dbReference type="ChEBI" id="CHEBI:59789"/>
        <label>2</label>
    </ligand>
</feature>
<feature type="binding site" evidence="1">
    <location>
        <position position="211"/>
    </location>
    <ligand>
        <name>S-adenosyl-L-methionine</name>
        <dbReference type="ChEBI" id="CHEBI:59789"/>
        <label>2</label>
    </ligand>
</feature>
<feature type="binding site" evidence="1">
    <location>
        <position position="245"/>
    </location>
    <ligand>
        <name>S-adenosyl-L-methionine</name>
        <dbReference type="ChEBI" id="CHEBI:59789"/>
        <label>2</label>
    </ligand>
</feature>
<feature type="binding site" evidence="1">
    <location>
        <position position="331"/>
    </location>
    <ligand>
        <name>S-adenosyl-L-methionine</name>
        <dbReference type="ChEBI" id="CHEBI:59789"/>
        <label>1</label>
    </ligand>
</feature>
<proteinExistence type="inferred from homology"/>
<gene>
    <name type="primary">hemN</name>
    <name type="ordered locus">jhp_0610</name>
</gene>
<name>HEMN_HELPJ</name>
<accession>Q9ZLH0</accession>
<keyword id="KW-0004">4Fe-4S</keyword>
<keyword id="KW-0963">Cytoplasm</keyword>
<keyword id="KW-0408">Iron</keyword>
<keyword id="KW-0411">Iron-sulfur</keyword>
<keyword id="KW-0479">Metal-binding</keyword>
<keyword id="KW-0560">Oxidoreductase</keyword>
<keyword id="KW-0627">Porphyrin biosynthesis</keyword>
<keyword id="KW-0949">S-adenosyl-L-methionine</keyword>
<reference key="1">
    <citation type="journal article" date="1999" name="Nature">
        <title>Genomic sequence comparison of two unrelated isolates of the human gastric pathogen Helicobacter pylori.</title>
        <authorList>
            <person name="Alm R.A."/>
            <person name="Ling L.-S.L."/>
            <person name="Moir D.T."/>
            <person name="King B.L."/>
            <person name="Brown E.D."/>
            <person name="Doig P.C."/>
            <person name="Smith D.R."/>
            <person name="Noonan B."/>
            <person name="Guild B.C."/>
            <person name="deJonge B.L."/>
            <person name="Carmel G."/>
            <person name="Tummino P.J."/>
            <person name="Caruso A."/>
            <person name="Uria-Nickelsen M."/>
            <person name="Mills D.M."/>
            <person name="Ives C."/>
            <person name="Gibson R."/>
            <person name="Merberg D."/>
            <person name="Mills S.D."/>
            <person name="Jiang Q."/>
            <person name="Taylor D.E."/>
            <person name="Vovis G.F."/>
            <person name="Trust T.J."/>
        </authorList>
    </citation>
    <scope>NUCLEOTIDE SEQUENCE [LARGE SCALE GENOMIC DNA]</scope>
    <source>
        <strain>J99 / ATCC 700824</strain>
    </source>
</reference>
<sequence length="457" mass="53278">MQTIDFEKFSQYSKPGPRYTSYPTAVEFKENFNEESLKTAFFNHDNLKNPMPLSLYTHLPFCRSACYFCACSVIYTSLEEKKVRYISYLKKELALLKNAMDTNREVAQFHYGGGTPTFFSPPQLDEITQSIQEVFPNFSQDIEMSCEIDPRHFTKEHMQTLFDRGFNRLSFGVQDFDLEVQKAIHRIQPFEMVQESVKLARDYGIKSINFDLIYGLPNQTKEGFLKTLEWVLKLDPDRLAVFNYAHVPWVKKTMRKIDETLLPSPRDKLEILESLISFLEKANYQMIGMDHFAKSDNELYLALQKAELRRNFQGYTTKKFTQTIGIGVTSIGEGSDYYTQNYKDLHYYEKALDLGHLPVERGVALSQEDVLRKEVIMQMMSNLKLDYSKIEEKFSIDFKAHFKKELEKLKPYEEAGLLSFNSKGFEMTRTGGMLVRNMAMEFDAYLRGGEKHFSKTL</sequence>